<protein>
    <recommendedName>
        <fullName evidence="2">tRNA (guanine-N(7)-)-methyltransferase</fullName>
        <ecNumber evidence="2">2.1.1.33</ecNumber>
    </recommendedName>
    <alternativeName>
        <fullName evidence="2">tRNA (guanine(46)-N(7))-methyltransferase</fullName>
    </alternativeName>
    <alternativeName>
        <fullName evidence="2">tRNA(m7G46)-methyltransferase</fullName>
    </alternativeName>
</protein>
<comment type="function">
    <text evidence="2">Catalyzes the formation of N(7)-methylguanine at position 46 (m7G46) in tRNA.</text>
</comment>
<comment type="catalytic activity">
    <reaction evidence="2">
        <text>guanosine(46) in tRNA + S-adenosyl-L-methionine = N(7)-methylguanosine(46) in tRNA + S-adenosyl-L-homocysteine</text>
        <dbReference type="Rhea" id="RHEA:42708"/>
        <dbReference type="Rhea" id="RHEA-COMP:10188"/>
        <dbReference type="Rhea" id="RHEA-COMP:10189"/>
        <dbReference type="ChEBI" id="CHEBI:57856"/>
        <dbReference type="ChEBI" id="CHEBI:59789"/>
        <dbReference type="ChEBI" id="CHEBI:74269"/>
        <dbReference type="ChEBI" id="CHEBI:74480"/>
        <dbReference type="EC" id="2.1.1.33"/>
    </reaction>
</comment>
<comment type="pathway">
    <text evidence="2">tRNA modification; N(7)-methylguanine-tRNA biosynthesis.</text>
</comment>
<comment type="similarity">
    <text evidence="2">Belongs to the class I-like SAM-binding methyltransferase superfamily. TrmB family.</text>
</comment>
<accession>B2GDC8</accession>
<keyword id="KW-0489">Methyltransferase</keyword>
<keyword id="KW-1185">Reference proteome</keyword>
<keyword id="KW-0949">S-adenosyl-L-methionine</keyword>
<keyword id="KW-0808">Transferase</keyword>
<keyword id="KW-0819">tRNA processing</keyword>
<organism>
    <name type="scientific">Limosilactobacillus fermentum (strain NBRC 3956 / LMG 18251)</name>
    <name type="common">Lactobacillus fermentum</name>
    <dbReference type="NCBI Taxonomy" id="334390"/>
    <lineage>
        <taxon>Bacteria</taxon>
        <taxon>Bacillati</taxon>
        <taxon>Bacillota</taxon>
        <taxon>Bacilli</taxon>
        <taxon>Lactobacillales</taxon>
        <taxon>Lactobacillaceae</taxon>
        <taxon>Limosilactobacillus</taxon>
    </lineage>
</organism>
<gene>
    <name evidence="2" type="primary">trmB</name>
    <name type="ordered locus">LAF_1324</name>
</gene>
<sequence length="215" mass="24489">MRVKHKKWAVPLMEAHPEMMTMDPASFKGRWQERFAKPQPLQVEVGMGKGQFIIGMAKAHPEINFIGLEIESTVAAIALKNALPEQLPNLTLVRGDGAGLDTYFEDGSIDRLYLNFSDPWPKTRHEKRRLTYKTFLANYQQVVKPGGGLEFKTDNQGLFEYSLTSLNNFGMIFDGVWLNLHESPENEGNVETEYEQRFASLGQPIYKLKAHFPVN</sequence>
<proteinExistence type="inferred from homology"/>
<reference key="1">
    <citation type="journal article" date="2008" name="DNA Res.">
        <title>Comparative genome analysis of Lactobacillus reuteri and Lactobacillus fermentum reveal a genomic island for reuterin and cobalamin production.</title>
        <authorList>
            <person name="Morita H."/>
            <person name="Toh H."/>
            <person name="Fukuda S."/>
            <person name="Horikawa H."/>
            <person name="Oshima K."/>
            <person name="Suzuki T."/>
            <person name="Murakami M."/>
            <person name="Hisamatsu S."/>
            <person name="Kato Y."/>
            <person name="Takizawa T."/>
            <person name="Fukuoka H."/>
            <person name="Yoshimura T."/>
            <person name="Itoh K."/>
            <person name="O'Sullivan D.J."/>
            <person name="McKay L.L."/>
            <person name="Ohno H."/>
            <person name="Kikuchi J."/>
            <person name="Masaoka T."/>
            <person name="Hattori M."/>
        </authorList>
    </citation>
    <scope>NUCLEOTIDE SEQUENCE [LARGE SCALE GENOMIC DNA]</scope>
    <source>
        <strain>NBRC 3956 / LMG 18251</strain>
    </source>
</reference>
<name>TRMB_LIMF3</name>
<dbReference type="EC" id="2.1.1.33" evidence="2"/>
<dbReference type="EMBL" id="AP008937">
    <property type="protein sequence ID" value="BAG27660.1"/>
    <property type="molecule type" value="Genomic_DNA"/>
</dbReference>
<dbReference type="RefSeq" id="WP_003683688.1">
    <property type="nucleotide sequence ID" value="NC_010610.1"/>
</dbReference>
<dbReference type="SMR" id="B2GDC8"/>
<dbReference type="GeneID" id="83714226"/>
<dbReference type="KEGG" id="lfe:LAF_1324"/>
<dbReference type="eggNOG" id="COG0220">
    <property type="taxonomic scope" value="Bacteria"/>
</dbReference>
<dbReference type="HOGENOM" id="CLU_050910_2_1_9"/>
<dbReference type="UniPathway" id="UPA00989"/>
<dbReference type="Proteomes" id="UP000001697">
    <property type="component" value="Chromosome"/>
</dbReference>
<dbReference type="GO" id="GO:0043527">
    <property type="term" value="C:tRNA methyltransferase complex"/>
    <property type="evidence" value="ECO:0007669"/>
    <property type="project" value="TreeGrafter"/>
</dbReference>
<dbReference type="GO" id="GO:0008176">
    <property type="term" value="F:tRNA (guanine(46)-N7)-methyltransferase activity"/>
    <property type="evidence" value="ECO:0007669"/>
    <property type="project" value="UniProtKB-UniRule"/>
</dbReference>
<dbReference type="CDD" id="cd02440">
    <property type="entry name" value="AdoMet_MTases"/>
    <property type="match status" value="1"/>
</dbReference>
<dbReference type="FunFam" id="3.40.50.150:FF:000035">
    <property type="entry name" value="tRNA (guanine-N(7)-)-methyltransferase"/>
    <property type="match status" value="1"/>
</dbReference>
<dbReference type="Gene3D" id="3.40.50.150">
    <property type="entry name" value="Vaccinia Virus protein VP39"/>
    <property type="match status" value="1"/>
</dbReference>
<dbReference type="HAMAP" id="MF_01057">
    <property type="entry name" value="tRNA_methyltr_TrmB"/>
    <property type="match status" value="1"/>
</dbReference>
<dbReference type="InterPro" id="IPR029063">
    <property type="entry name" value="SAM-dependent_MTases_sf"/>
</dbReference>
<dbReference type="InterPro" id="IPR003358">
    <property type="entry name" value="tRNA_(Gua-N-7)_MeTrfase_Trmb"/>
</dbReference>
<dbReference type="InterPro" id="IPR055361">
    <property type="entry name" value="tRNA_methyltr_TrmB_bact"/>
</dbReference>
<dbReference type="NCBIfam" id="NF001080">
    <property type="entry name" value="PRK00121.2-2"/>
    <property type="match status" value="1"/>
</dbReference>
<dbReference type="NCBIfam" id="TIGR00091">
    <property type="entry name" value="tRNA (guanosine(46)-N7)-methyltransferase TrmB"/>
    <property type="match status" value="1"/>
</dbReference>
<dbReference type="PANTHER" id="PTHR23417">
    <property type="entry name" value="3-DEOXY-D-MANNO-OCTULOSONIC-ACID TRANSFERASE/TRNA GUANINE-N 7 - -METHYLTRANSFERASE"/>
    <property type="match status" value="1"/>
</dbReference>
<dbReference type="PANTHER" id="PTHR23417:SF14">
    <property type="entry name" value="PENTACOTRIPEPTIDE-REPEAT REGION OF PRORP DOMAIN-CONTAINING PROTEIN"/>
    <property type="match status" value="1"/>
</dbReference>
<dbReference type="Pfam" id="PF02390">
    <property type="entry name" value="Methyltransf_4"/>
    <property type="match status" value="1"/>
</dbReference>
<dbReference type="SUPFAM" id="SSF53335">
    <property type="entry name" value="S-adenosyl-L-methionine-dependent methyltransferases"/>
    <property type="match status" value="1"/>
</dbReference>
<dbReference type="PROSITE" id="PS51625">
    <property type="entry name" value="SAM_MT_TRMB"/>
    <property type="match status" value="1"/>
</dbReference>
<feature type="chain" id="PRO_1000136352" description="tRNA (guanine-N(7)-)-methyltransferase">
    <location>
        <begin position="1"/>
        <end position="215"/>
    </location>
</feature>
<feature type="region of interest" description="Interaction with RNA" evidence="2">
    <location>
        <begin position="124"/>
        <end position="129"/>
    </location>
</feature>
<feature type="active site" evidence="1">
    <location>
        <position position="118"/>
    </location>
</feature>
<feature type="binding site" evidence="2">
    <location>
        <position position="44"/>
    </location>
    <ligand>
        <name>S-adenosyl-L-methionine</name>
        <dbReference type="ChEBI" id="CHEBI:59789"/>
    </ligand>
</feature>
<feature type="binding site" evidence="2">
    <location>
        <position position="69"/>
    </location>
    <ligand>
        <name>S-adenosyl-L-methionine</name>
        <dbReference type="ChEBI" id="CHEBI:59789"/>
    </ligand>
</feature>
<feature type="binding site" evidence="2">
    <location>
        <position position="96"/>
    </location>
    <ligand>
        <name>S-adenosyl-L-methionine</name>
        <dbReference type="ChEBI" id="CHEBI:59789"/>
    </ligand>
</feature>
<feature type="binding site" evidence="2">
    <location>
        <position position="118"/>
    </location>
    <ligand>
        <name>S-adenosyl-L-methionine</name>
        <dbReference type="ChEBI" id="CHEBI:59789"/>
    </ligand>
</feature>
<feature type="binding site" evidence="2">
    <location>
        <position position="122"/>
    </location>
    <ligand>
        <name>substrate</name>
    </ligand>
</feature>
<feature type="binding site" evidence="2">
    <location>
        <position position="154"/>
    </location>
    <ligand>
        <name>substrate</name>
    </ligand>
</feature>
<feature type="binding site" evidence="2">
    <location>
        <begin position="192"/>
        <end position="195"/>
    </location>
    <ligand>
        <name>substrate</name>
    </ligand>
</feature>
<evidence type="ECO:0000250" key="1"/>
<evidence type="ECO:0000255" key="2">
    <source>
        <dbReference type="HAMAP-Rule" id="MF_01057"/>
    </source>
</evidence>